<proteinExistence type="inferred from homology"/>
<dbReference type="EMBL" id="CP000409">
    <property type="protein sequence ID" value="ABV73063.1"/>
    <property type="molecule type" value="Genomic_DNA"/>
</dbReference>
<dbReference type="RefSeq" id="WP_012148264.1">
    <property type="nucleotide sequence ID" value="NC_009879.1"/>
</dbReference>
<dbReference type="SMR" id="A8EXI0"/>
<dbReference type="STRING" id="293613.A1E_00575"/>
<dbReference type="KEGG" id="rcm:A1E_00575"/>
<dbReference type="eggNOG" id="COG0341">
    <property type="taxonomic scope" value="Bacteria"/>
</dbReference>
<dbReference type="HOGENOM" id="CLU_050012_1_1_5"/>
<dbReference type="Proteomes" id="UP000007056">
    <property type="component" value="Chromosome"/>
</dbReference>
<dbReference type="GO" id="GO:0005886">
    <property type="term" value="C:plasma membrane"/>
    <property type="evidence" value="ECO:0007669"/>
    <property type="project" value="UniProtKB-SubCell"/>
</dbReference>
<dbReference type="GO" id="GO:0015450">
    <property type="term" value="F:protein-transporting ATPase activity"/>
    <property type="evidence" value="ECO:0007669"/>
    <property type="project" value="InterPro"/>
</dbReference>
<dbReference type="GO" id="GO:0065002">
    <property type="term" value="P:intracellular protein transmembrane transport"/>
    <property type="evidence" value="ECO:0007669"/>
    <property type="project" value="UniProtKB-UniRule"/>
</dbReference>
<dbReference type="GO" id="GO:0006605">
    <property type="term" value="P:protein targeting"/>
    <property type="evidence" value="ECO:0007669"/>
    <property type="project" value="UniProtKB-UniRule"/>
</dbReference>
<dbReference type="GO" id="GO:0043952">
    <property type="term" value="P:protein transport by the Sec complex"/>
    <property type="evidence" value="ECO:0007669"/>
    <property type="project" value="UniProtKB-UniRule"/>
</dbReference>
<dbReference type="Gene3D" id="1.20.1640.10">
    <property type="entry name" value="Multidrug efflux transporter AcrB transmembrane domain"/>
    <property type="match status" value="1"/>
</dbReference>
<dbReference type="HAMAP" id="MF_01464_B">
    <property type="entry name" value="SecF_B"/>
    <property type="match status" value="1"/>
</dbReference>
<dbReference type="InterPro" id="IPR022813">
    <property type="entry name" value="SecD/SecF_arch_bac"/>
</dbReference>
<dbReference type="InterPro" id="IPR022645">
    <property type="entry name" value="SecD/SecF_bac"/>
</dbReference>
<dbReference type="InterPro" id="IPR022646">
    <property type="entry name" value="SecD/SecF_CS"/>
</dbReference>
<dbReference type="InterPro" id="IPR048634">
    <property type="entry name" value="SecD_SecF_C"/>
</dbReference>
<dbReference type="InterPro" id="IPR055344">
    <property type="entry name" value="SecD_SecF_C_bact"/>
</dbReference>
<dbReference type="InterPro" id="IPR005665">
    <property type="entry name" value="SecF_bac"/>
</dbReference>
<dbReference type="NCBIfam" id="TIGR00916">
    <property type="entry name" value="2A0604s01"/>
    <property type="match status" value="1"/>
</dbReference>
<dbReference type="NCBIfam" id="TIGR00966">
    <property type="entry name" value="transloc_SecF"/>
    <property type="match status" value="1"/>
</dbReference>
<dbReference type="PANTHER" id="PTHR30081:SF8">
    <property type="entry name" value="PROTEIN TRANSLOCASE SUBUNIT SECF"/>
    <property type="match status" value="1"/>
</dbReference>
<dbReference type="PANTHER" id="PTHR30081">
    <property type="entry name" value="PROTEIN-EXPORT MEMBRANE PROTEIN SEC"/>
    <property type="match status" value="1"/>
</dbReference>
<dbReference type="Pfam" id="PF07549">
    <property type="entry name" value="Sec_GG"/>
    <property type="match status" value="1"/>
</dbReference>
<dbReference type="Pfam" id="PF02355">
    <property type="entry name" value="SecD_SecF_C"/>
    <property type="match status" value="1"/>
</dbReference>
<dbReference type="PRINTS" id="PR01755">
    <property type="entry name" value="SECFTRNLCASE"/>
</dbReference>
<dbReference type="SUPFAM" id="SSF82866">
    <property type="entry name" value="Multidrug efflux transporter AcrB transmembrane domain"/>
    <property type="match status" value="1"/>
</dbReference>
<protein>
    <recommendedName>
        <fullName>Protein translocase subunit SecF</fullName>
    </recommendedName>
</protein>
<comment type="function">
    <text evidence="1">Part of the Sec protein translocase complex. Interacts with the SecYEG preprotein conducting channel. SecDF uses the proton motive force (PMF) to complete protein translocation after the ATP-dependent function of SecA.</text>
</comment>
<comment type="subunit">
    <text evidence="1">Forms a complex with SecD. Part of the essential Sec protein translocation apparatus which comprises SecA, SecYEG and auxiliary proteins SecDF-YajC and YidC.</text>
</comment>
<comment type="subcellular location">
    <subcellularLocation>
        <location evidence="1">Cell inner membrane</location>
        <topology evidence="1">Multi-pass membrane protein</topology>
    </subcellularLocation>
</comment>
<comment type="similarity">
    <text evidence="1">Belongs to the SecD/SecF family. SecF subfamily.</text>
</comment>
<gene>
    <name evidence="1" type="primary">secF</name>
    <name type="ordered locus">A1E_00575</name>
</gene>
<organism>
    <name type="scientific">Rickettsia canadensis (strain McKiel)</name>
    <dbReference type="NCBI Taxonomy" id="293613"/>
    <lineage>
        <taxon>Bacteria</taxon>
        <taxon>Pseudomonadati</taxon>
        <taxon>Pseudomonadota</taxon>
        <taxon>Alphaproteobacteria</taxon>
        <taxon>Rickettsiales</taxon>
        <taxon>Rickettsiaceae</taxon>
        <taxon>Rickettsieae</taxon>
        <taxon>Rickettsia</taxon>
        <taxon>belli group</taxon>
    </lineage>
</organism>
<reference key="1">
    <citation type="submission" date="2007-09" db="EMBL/GenBank/DDBJ databases">
        <title>Complete genome sequence of Rickettsia canadensis.</title>
        <authorList>
            <person name="Madan A."/>
            <person name="Fahey J."/>
            <person name="Helton E."/>
            <person name="Ketteman M."/>
            <person name="Madan A."/>
            <person name="Rodrigues S."/>
            <person name="Sanchez A."/>
            <person name="Whiting M."/>
            <person name="Dasch G."/>
            <person name="Eremeeva M."/>
        </authorList>
    </citation>
    <scope>NUCLEOTIDE SEQUENCE [LARGE SCALE GENOMIC DNA]</scope>
    <source>
        <strain>McKiel</strain>
    </source>
</reference>
<keyword id="KW-0997">Cell inner membrane</keyword>
<keyword id="KW-1003">Cell membrane</keyword>
<keyword id="KW-0472">Membrane</keyword>
<keyword id="KW-0653">Protein transport</keyword>
<keyword id="KW-0811">Translocation</keyword>
<keyword id="KW-0812">Transmembrane</keyword>
<keyword id="KW-1133">Transmembrane helix</keyword>
<keyword id="KW-0813">Transport</keyword>
<name>SECF_RICCK</name>
<evidence type="ECO:0000255" key="1">
    <source>
        <dbReference type="HAMAP-Rule" id="MF_01464"/>
    </source>
</evidence>
<sequence>MQIYPLRLLPNKIDFDFMNFKKVSYTFSIILSLISVISIGIYKFNFGIDFVGGIVIEVRLDQTPDLPKMRQILGELGIGEVVLQNFGSERDLSIRLGSSSEANLMENIELIKASLHNNFPYKFEYRKVDFVGPQVGRQLIEAGTMAMLFSFLAIMVYIWVRFEWYFGLGILIALMHDLILALGFMSMTKLDCNLSTIAAVLTIIGYSVNDSVVIYDRIRENLRKYYKKNITEIINLSINETLSRTILTVITTLLANLALILFGGEAIRSFSVLVFFGIIAGTYSSIFISAPILTMFANKKFNNKKFNNKR</sequence>
<feature type="chain" id="PRO_0000316281" description="Protein translocase subunit SecF">
    <location>
        <begin position="1"/>
        <end position="310"/>
    </location>
</feature>
<feature type="transmembrane region" description="Helical" evidence="1">
    <location>
        <begin position="20"/>
        <end position="42"/>
    </location>
</feature>
<feature type="transmembrane region" description="Helical" evidence="1">
    <location>
        <begin position="140"/>
        <end position="160"/>
    </location>
</feature>
<feature type="transmembrane region" description="Helical" evidence="1">
    <location>
        <begin position="164"/>
        <end position="184"/>
    </location>
</feature>
<feature type="transmembrane region" description="Helical" evidence="1">
    <location>
        <begin position="194"/>
        <end position="214"/>
    </location>
</feature>
<feature type="transmembrane region" description="Helical" evidence="1">
    <location>
        <begin position="246"/>
        <end position="266"/>
    </location>
</feature>
<feature type="transmembrane region" description="Helical" evidence="1">
    <location>
        <begin position="272"/>
        <end position="292"/>
    </location>
</feature>
<accession>A8EXI0</accession>